<sequence>MIIHFNKHSKKIILNIFLALLLVYFIFHCIYGNKGIIAYLKVNRQLEKAYDELKNLRAERVELEHNVKLLRTESLNKDMLEEQAKKILGIAAPNEQVFTIKDIASQR</sequence>
<name>Y423_RICPR</name>
<evidence type="ECO:0000255" key="1"/>
<evidence type="ECO:0000305" key="2"/>
<keyword id="KW-0472">Membrane</keyword>
<keyword id="KW-1185">Reference proteome</keyword>
<keyword id="KW-0812">Transmembrane</keyword>
<keyword id="KW-1133">Transmembrane helix</keyword>
<organism>
    <name type="scientific">Rickettsia prowazekii (strain Madrid E)</name>
    <dbReference type="NCBI Taxonomy" id="272947"/>
    <lineage>
        <taxon>Bacteria</taxon>
        <taxon>Pseudomonadati</taxon>
        <taxon>Pseudomonadota</taxon>
        <taxon>Alphaproteobacteria</taxon>
        <taxon>Rickettsiales</taxon>
        <taxon>Rickettsiaceae</taxon>
        <taxon>Rickettsieae</taxon>
        <taxon>Rickettsia</taxon>
        <taxon>typhus group</taxon>
    </lineage>
</organism>
<reference key="1">
    <citation type="journal article" date="1998" name="Nature">
        <title>The genome sequence of Rickettsia prowazekii and the origin of mitochondria.</title>
        <authorList>
            <person name="Andersson S.G.E."/>
            <person name="Zomorodipour A."/>
            <person name="Andersson J.O."/>
            <person name="Sicheritz-Ponten T."/>
            <person name="Alsmark U.C.M."/>
            <person name="Podowski R.M."/>
            <person name="Naeslund A.K."/>
            <person name="Eriksson A.-S."/>
            <person name="Winkler H.H."/>
            <person name="Kurland C.G."/>
        </authorList>
    </citation>
    <scope>NUCLEOTIDE SEQUENCE [LARGE SCALE GENOMIC DNA]</scope>
    <source>
        <strain>Madrid E</strain>
    </source>
</reference>
<dbReference type="EMBL" id="AJ235271">
    <property type="protein sequence ID" value="CAA14880.1"/>
    <property type="molecule type" value="Genomic_DNA"/>
</dbReference>
<dbReference type="PIR" id="F71700">
    <property type="entry name" value="F71700"/>
</dbReference>
<dbReference type="RefSeq" id="NP_220804.1">
    <property type="nucleotide sequence ID" value="NC_000963.1"/>
</dbReference>
<dbReference type="RefSeq" id="WP_004599465.1">
    <property type="nucleotide sequence ID" value="NC_000963.1"/>
</dbReference>
<dbReference type="SMR" id="Q9ZDA9"/>
<dbReference type="STRING" id="272947.gene:17555503"/>
<dbReference type="EnsemblBacteria" id="CAA14880">
    <property type="protein sequence ID" value="CAA14880"/>
    <property type="gene ID" value="CAA14880"/>
</dbReference>
<dbReference type="KEGG" id="rpr:RP423"/>
<dbReference type="PATRIC" id="fig|272947.5.peg.436"/>
<dbReference type="eggNOG" id="COG2919">
    <property type="taxonomic scope" value="Bacteria"/>
</dbReference>
<dbReference type="HOGENOM" id="CLU_159931_2_0_5"/>
<dbReference type="OrthoDB" id="9815600at2"/>
<dbReference type="Proteomes" id="UP000002480">
    <property type="component" value="Chromosome"/>
</dbReference>
<dbReference type="GO" id="GO:0016020">
    <property type="term" value="C:membrane"/>
    <property type="evidence" value="ECO:0007669"/>
    <property type="project" value="UniProtKB-SubCell"/>
</dbReference>
<dbReference type="InterPro" id="IPR007060">
    <property type="entry name" value="FtsL/DivIC"/>
</dbReference>
<dbReference type="Pfam" id="PF04977">
    <property type="entry name" value="DivIC"/>
    <property type="match status" value="1"/>
</dbReference>
<proteinExistence type="predicted"/>
<protein>
    <recommendedName>
        <fullName>Uncharacterized protein RP423</fullName>
    </recommendedName>
</protein>
<feature type="chain" id="PRO_0000101368" description="Uncharacterized protein RP423">
    <location>
        <begin position="1"/>
        <end position="107"/>
    </location>
</feature>
<feature type="transmembrane region" description="Helical" evidence="1">
    <location>
        <begin position="12"/>
        <end position="32"/>
    </location>
</feature>
<comment type="subcellular location">
    <subcellularLocation>
        <location evidence="2">Membrane</location>
        <topology evidence="2">Single-pass membrane protein</topology>
    </subcellularLocation>
</comment>
<accession>Q9ZDA9</accession>
<gene>
    <name type="ordered locus">RP423</name>
</gene>